<dbReference type="EMBL" id="AM920437">
    <property type="protein sequence ID" value="CAP99571.1"/>
    <property type="molecule type" value="Genomic_DNA"/>
</dbReference>
<dbReference type="RefSeq" id="XP_002566177.1">
    <property type="nucleotide sequence ID" value="XM_002566131.1"/>
</dbReference>
<dbReference type="VEuPathDB" id="FungiDB:PCH_Pc22g22830"/>
<dbReference type="HOGENOM" id="CLU_1294794_0_0_1"/>
<dbReference type="Proteomes" id="UP000000724">
    <property type="component" value="Contig Pc00c22"/>
</dbReference>
<reference key="1">
    <citation type="journal article" date="2008" name="Nat. Biotechnol.">
        <title>Genome sequencing and analysis of the filamentous fungus Penicillium chrysogenum.</title>
        <authorList>
            <person name="van den Berg M.A."/>
            <person name="Albang R."/>
            <person name="Albermann K."/>
            <person name="Badger J.H."/>
            <person name="Daran J.-M."/>
            <person name="Driessen A.J.M."/>
            <person name="Garcia-Estrada C."/>
            <person name="Fedorova N.D."/>
            <person name="Harris D.M."/>
            <person name="Heijne W.H.M."/>
            <person name="Joardar V.S."/>
            <person name="Kiel J.A.K.W."/>
            <person name="Kovalchuk A."/>
            <person name="Martin J.F."/>
            <person name="Nierman W.C."/>
            <person name="Nijland J.G."/>
            <person name="Pronk J.T."/>
            <person name="Roubos J.A."/>
            <person name="van der Klei I.J."/>
            <person name="van Peij N.N.M.E."/>
            <person name="Veenhuis M."/>
            <person name="von Doehren H."/>
            <person name="Wagner C."/>
            <person name="Wortman J.R."/>
            <person name="Bovenberg R.A.L."/>
        </authorList>
    </citation>
    <scope>NUCLEOTIDE SEQUENCE [LARGE SCALE GENOMIC DNA]</scope>
    <source>
        <strain>ATCC 28089 / DSM 1075 / NRRL 1951 / Wisconsin 54-1255</strain>
    </source>
</reference>
<reference key="2">
    <citation type="journal article" date="2013" name="Tetrahedron">
        <title>Reconstituted biosynthesis of fungal meroterpenoid andrastin A.</title>
        <authorList>
            <person name="Matsuda Y."/>
            <person name="Awakawa T."/>
            <person name="Abe I."/>
        </authorList>
    </citation>
    <scope>IDENTIFICATION</scope>
    <scope>FUNCTION</scope>
</reference>
<sequence>MQGWIVRISHWNTYLPIAGTMQACGDKSSVWKVAIGYNGHPEEATFFNGRRSYAVNNRGAKPEKERTLRLNIEITPVESQGCNQLPTPATFEFRIPHSHFFNWSVELYFHNAVLPSYRCHFCPRPSLVLRTHAISAEYSWLAVDITLGLNRHHNIAVEYVKYIKHLEVGKDIICQLLYLSGYFLYVVPLSIPTKYSKYVSQCTVDPYREAGGF</sequence>
<gene>
    <name evidence="2" type="primary">adrB</name>
    <name type="ORF">Pc22g22830</name>
</gene>
<name>ADRB_PENRW</name>
<keyword id="KW-1185">Reference proteome</keyword>
<protein>
    <recommendedName>
        <fullName evidence="2">Andrastin A biosynthesis cluster protein B</fullName>
    </recommendedName>
</protein>
<feature type="chain" id="PRO_0000446488" description="Andrastin A biosynthesis cluster protein B">
    <location>
        <begin position="1"/>
        <end position="213"/>
    </location>
</feature>
<proteinExistence type="predicted"/>
<comment type="function">
    <text evidence="1">Part of the gene cluster that mediates the biosynthesis of andrastins, meroterpenoid compounds that exhibit inhibitory activity against ras farnesyltransferase, suggesting that they could be promising leads for antitumor agents (Ref.2). The first step of the pathway is the synthesis of 3,5-dimethylorsellinic acid (DMOA) by the polyketide synthase adrD via condensation of one acetyl-CoA starter unit with 3 malonyl-CoA units and 2 methylations (Ref.2). DMAO is then converted to farnesyl-DMAO by the prenyltransferase adrG (Ref.2). The methyltransferase adrK catalyzes the methylation of the carboxyl group of farnesyl-DMAO to farnesyl-DMAO methyl ester which is further converted to epoxyfarnesyl-DMAO methyl ester by the FAD-dependent monooxygenase adrH (Ref.2). The terpene cyclase adrI then catalyzes the carbon skeletal rearrangement to generate the andrastin E, the first compound in the pathway having the andrastin scaffold, with the tetracyclic ring system (Ref.2). The post-cyclization tailoring enzymes adrF, adrE, adrJ, and adrA, are involved in the conversion of andrastin E into andrastin A. The short chain dehydrogenase adrF is responsible for the oxidation of the C-3 a hydroxyl group of andrastin E to yield the corresponding ketone, andrastin D. The ketoreductase adrE stereoselectively reduces the carbonyl moiety to reverse the stereochemistry of the C-3 position to yield andrastin F. The acetyltransferase adrJ is the acetyltransferase that attaches the acetyl group to the C-3 hydroxyl group of andrastin F to yield andrastin C. Finally, the cytochrome P450 monooxygenase adrA catalyzes two sequential oxidation reactions of the C-23 methyl group, to generate the corresponding alcohol andrastin B, and aldehyde andrastin A (Ref.2).</text>
</comment>
<organism>
    <name type="scientific">Penicillium rubens (strain ATCC 28089 / DSM 1075 / NRRL 1951 / Wisconsin 54-1255)</name>
    <name type="common">Penicillium chrysogenum</name>
    <dbReference type="NCBI Taxonomy" id="500485"/>
    <lineage>
        <taxon>Eukaryota</taxon>
        <taxon>Fungi</taxon>
        <taxon>Dikarya</taxon>
        <taxon>Ascomycota</taxon>
        <taxon>Pezizomycotina</taxon>
        <taxon>Eurotiomycetes</taxon>
        <taxon>Eurotiomycetidae</taxon>
        <taxon>Eurotiales</taxon>
        <taxon>Aspergillaceae</taxon>
        <taxon>Penicillium</taxon>
        <taxon>Penicillium chrysogenum species complex</taxon>
    </lineage>
</organism>
<evidence type="ECO:0000269" key="1">
    <source ref="2"/>
</evidence>
<evidence type="ECO:0000303" key="2">
    <source ref="2"/>
</evidence>
<accession>B6HUQ5</accession>